<protein>
    <recommendedName>
        <fullName evidence="1">Ribosomal protein uS12 methylthiotransferase RimO</fullName>
        <shortName evidence="1">uS12 MTTase</shortName>
        <shortName evidence="1">uS12 methylthiotransferase</shortName>
        <ecNumber evidence="1">2.8.4.4</ecNumber>
    </recommendedName>
    <alternativeName>
        <fullName evidence="1">Ribosomal protein uS12 (aspartate-C(3))-methylthiotransferase</fullName>
    </alternativeName>
    <alternativeName>
        <fullName evidence="1">Ribosome maturation factor RimO</fullName>
    </alternativeName>
</protein>
<feature type="chain" id="PRO_0000374952" description="Ribosomal protein uS12 methylthiotransferase RimO">
    <location>
        <begin position="1"/>
        <end position="440"/>
    </location>
</feature>
<feature type="domain" description="MTTase N-terminal" evidence="1">
    <location>
        <begin position="5"/>
        <end position="115"/>
    </location>
</feature>
<feature type="domain" description="Radical SAM core" evidence="2">
    <location>
        <begin position="134"/>
        <end position="372"/>
    </location>
</feature>
<feature type="domain" description="TRAM" evidence="1">
    <location>
        <begin position="375"/>
        <end position="440"/>
    </location>
</feature>
<feature type="binding site" evidence="1">
    <location>
        <position position="14"/>
    </location>
    <ligand>
        <name>[4Fe-4S] cluster</name>
        <dbReference type="ChEBI" id="CHEBI:49883"/>
        <label>1</label>
    </ligand>
</feature>
<feature type="binding site" evidence="1">
    <location>
        <position position="50"/>
    </location>
    <ligand>
        <name>[4Fe-4S] cluster</name>
        <dbReference type="ChEBI" id="CHEBI:49883"/>
        <label>1</label>
    </ligand>
</feature>
<feature type="binding site" evidence="1">
    <location>
        <position position="79"/>
    </location>
    <ligand>
        <name>[4Fe-4S] cluster</name>
        <dbReference type="ChEBI" id="CHEBI:49883"/>
        <label>1</label>
    </ligand>
</feature>
<feature type="binding site" evidence="1">
    <location>
        <position position="148"/>
    </location>
    <ligand>
        <name>[4Fe-4S] cluster</name>
        <dbReference type="ChEBI" id="CHEBI:49883"/>
        <label>2</label>
        <note>4Fe-4S-S-AdoMet</note>
    </ligand>
</feature>
<feature type="binding site" evidence="1">
    <location>
        <position position="152"/>
    </location>
    <ligand>
        <name>[4Fe-4S] cluster</name>
        <dbReference type="ChEBI" id="CHEBI:49883"/>
        <label>2</label>
        <note>4Fe-4S-S-AdoMet</note>
    </ligand>
</feature>
<feature type="binding site" evidence="1">
    <location>
        <position position="155"/>
    </location>
    <ligand>
        <name>[4Fe-4S] cluster</name>
        <dbReference type="ChEBI" id="CHEBI:49883"/>
        <label>2</label>
        <note>4Fe-4S-S-AdoMet</note>
    </ligand>
</feature>
<evidence type="ECO:0000255" key="1">
    <source>
        <dbReference type="HAMAP-Rule" id="MF_01865"/>
    </source>
</evidence>
<evidence type="ECO:0000255" key="2">
    <source>
        <dbReference type="PROSITE-ProRule" id="PRU01266"/>
    </source>
</evidence>
<evidence type="ECO:0000305" key="3"/>
<accession>A4VKC4</accession>
<proteinExistence type="inferred from homology"/>
<organism>
    <name type="scientific">Stutzerimonas stutzeri (strain A1501)</name>
    <name type="common">Pseudomonas stutzeri</name>
    <dbReference type="NCBI Taxonomy" id="379731"/>
    <lineage>
        <taxon>Bacteria</taxon>
        <taxon>Pseudomonadati</taxon>
        <taxon>Pseudomonadota</taxon>
        <taxon>Gammaproteobacteria</taxon>
        <taxon>Pseudomonadales</taxon>
        <taxon>Pseudomonadaceae</taxon>
        <taxon>Stutzerimonas</taxon>
    </lineage>
</organism>
<keyword id="KW-0004">4Fe-4S</keyword>
<keyword id="KW-0963">Cytoplasm</keyword>
<keyword id="KW-0408">Iron</keyword>
<keyword id="KW-0411">Iron-sulfur</keyword>
<keyword id="KW-0479">Metal-binding</keyword>
<keyword id="KW-1185">Reference proteome</keyword>
<keyword id="KW-0949">S-adenosyl-L-methionine</keyword>
<keyword id="KW-0808">Transferase</keyword>
<reference key="1">
    <citation type="journal article" date="2008" name="Proc. Natl. Acad. Sci. U.S.A.">
        <title>Nitrogen fixation island and rhizosphere competence traits in the genome of root-associated Pseudomonas stutzeri A1501.</title>
        <authorList>
            <person name="Yan Y."/>
            <person name="Yang J."/>
            <person name="Dou Y."/>
            <person name="Chen M."/>
            <person name="Ping S."/>
            <person name="Peng J."/>
            <person name="Lu W."/>
            <person name="Zhang W."/>
            <person name="Yao Z."/>
            <person name="Li H."/>
            <person name="Liu W."/>
            <person name="He S."/>
            <person name="Geng L."/>
            <person name="Zhang X."/>
            <person name="Yang F."/>
            <person name="Yu H."/>
            <person name="Zhan Y."/>
            <person name="Li D."/>
            <person name="Lin Z."/>
            <person name="Wang Y."/>
            <person name="Elmerich C."/>
            <person name="Lin M."/>
            <person name="Jin Q."/>
        </authorList>
    </citation>
    <scope>NUCLEOTIDE SEQUENCE [LARGE SCALE GENOMIC DNA]</scope>
    <source>
        <strain>A1501</strain>
    </source>
</reference>
<comment type="function">
    <text evidence="1">Catalyzes the methylthiolation of an aspartic acid residue of ribosomal protein uS12.</text>
</comment>
<comment type="catalytic activity">
    <reaction evidence="1">
        <text>L-aspartate(89)-[ribosomal protein uS12]-hydrogen + (sulfur carrier)-SH + AH2 + 2 S-adenosyl-L-methionine = 3-methylsulfanyl-L-aspartate(89)-[ribosomal protein uS12]-hydrogen + (sulfur carrier)-H + 5'-deoxyadenosine + L-methionine + A + S-adenosyl-L-homocysteine + 2 H(+)</text>
        <dbReference type="Rhea" id="RHEA:37087"/>
        <dbReference type="Rhea" id="RHEA-COMP:10460"/>
        <dbReference type="Rhea" id="RHEA-COMP:10461"/>
        <dbReference type="Rhea" id="RHEA-COMP:14737"/>
        <dbReference type="Rhea" id="RHEA-COMP:14739"/>
        <dbReference type="ChEBI" id="CHEBI:13193"/>
        <dbReference type="ChEBI" id="CHEBI:15378"/>
        <dbReference type="ChEBI" id="CHEBI:17319"/>
        <dbReference type="ChEBI" id="CHEBI:17499"/>
        <dbReference type="ChEBI" id="CHEBI:29917"/>
        <dbReference type="ChEBI" id="CHEBI:29961"/>
        <dbReference type="ChEBI" id="CHEBI:57844"/>
        <dbReference type="ChEBI" id="CHEBI:57856"/>
        <dbReference type="ChEBI" id="CHEBI:59789"/>
        <dbReference type="ChEBI" id="CHEBI:64428"/>
        <dbReference type="ChEBI" id="CHEBI:73599"/>
        <dbReference type="EC" id="2.8.4.4"/>
    </reaction>
</comment>
<comment type="cofactor">
    <cofactor evidence="1">
        <name>[4Fe-4S] cluster</name>
        <dbReference type="ChEBI" id="CHEBI:49883"/>
    </cofactor>
    <text evidence="1">Binds 2 [4Fe-4S] clusters. One cluster is coordinated with 3 cysteines and an exchangeable S-adenosyl-L-methionine.</text>
</comment>
<comment type="subcellular location">
    <subcellularLocation>
        <location evidence="1">Cytoplasm</location>
    </subcellularLocation>
</comment>
<comment type="similarity">
    <text evidence="1">Belongs to the methylthiotransferase family. RimO subfamily.</text>
</comment>
<comment type="sequence caution" evidence="3">
    <conflict type="erroneous initiation">
        <sequence resource="EMBL-CDS" id="ABP79425"/>
    </conflict>
</comment>
<gene>
    <name evidence="1" type="primary">rimO</name>
    <name type="ordered locus">PST_1747</name>
</gene>
<sequence>MSKTPTVGFVSLGCPKATVDSERILTQLRMEGYQIVPSYEDADVVVVNTCGFIDSAKAESLDAIGEAIAENGKVIVTGCMGVDENNIRGVHPSVLAVTGPQQYEQVVNAVHEVVPPSIEHDPFVDLVPPQGIKLTPRHYAYLKISEGCNHSCSFCIIPSMRGKLVSRPVGDVLSEAERLVKAGVKEVLVISQDTSAYGVDLKYKLDFWNGQPVKTRMLELCEELGKMGVWVRLHYVYPYPNVDDVIPLMAAGKILPYLDIPFQHASPKVLKAMKRPAFEDKTLARIKKWREICPELTIRSTFIVGFPGETEEDFQYLLDWLTEAQLDRVGCFQYSPVDGAPAEAMNLEPVPDEIKQDRWDRFMAHQQAISAARLQLKVGKELDVLIDEVDEDGAIGRSWADAPEIDGMVYVDSEQPLQPGDKVRVRVTNADEYDLWAEVI</sequence>
<dbReference type="EC" id="2.8.4.4" evidence="1"/>
<dbReference type="EMBL" id="CP000304">
    <property type="protein sequence ID" value="ABP79425.1"/>
    <property type="status" value="ALT_INIT"/>
    <property type="molecule type" value="Genomic_DNA"/>
</dbReference>
<dbReference type="RefSeq" id="WP_017246044.1">
    <property type="nucleotide sequence ID" value="NC_009434.1"/>
</dbReference>
<dbReference type="SMR" id="A4VKC4"/>
<dbReference type="KEGG" id="psa:PST_1747"/>
<dbReference type="eggNOG" id="COG0621">
    <property type="taxonomic scope" value="Bacteria"/>
</dbReference>
<dbReference type="HOGENOM" id="CLU_018697_0_0_6"/>
<dbReference type="Proteomes" id="UP000000233">
    <property type="component" value="Chromosome"/>
</dbReference>
<dbReference type="GO" id="GO:0005829">
    <property type="term" value="C:cytosol"/>
    <property type="evidence" value="ECO:0007669"/>
    <property type="project" value="TreeGrafter"/>
</dbReference>
<dbReference type="GO" id="GO:0051539">
    <property type="term" value="F:4 iron, 4 sulfur cluster binding"/>
    <property type="evidence" value="ECO:0007669"/>
    <property type="project" value="UniProtKB-UniRule"/>
</dbReference>
<dbReference type="GO" id="GO:0035599">
    <property type="term" value="F:aspartic acid methylthiotransferase activity"/>
    <property type="evidence" value="ECO:0007669"/>
    <property type="project" value="TreeGrafter"/>
</dbReference>
<dbReference type="GO" id="GO:0046872">
    <property type="term" value="F:metal ion binding"/>
    <property type="evidence" value="ECO:0007669"/>
    <property type="project" value="UniProtKB-KW"/>
</dbReference>
<dbReference type="GO" id="GO:0103039">
    <property type="term" value="F:protein methylthiotransferase activity"/>
    <property type="evidence" value="ECO:0007669"/>
    <property type="project" value="UniProtKB-EC"/>
</dbReference>
<dbReference type="GO" id="GO:0006400">
    <property type="term" value="P:tRNA modification"/>
    <property type="evidence" value="ECO:0007669"/>
    <property type="project" value="InterPro"/>
</dbReference>
<dbReference type="CDD" id="cd01335">
    <property type="entry name" value="Radical_SAM"/>
    <property type="match status" value="1"/>
</dbReference>
<dbReference type="FunFam" id="2.40.50.140:FF:000060">
    <property type="entry name" value="Ribosomal protein S12 methylthiotransferase RimO"/>
    <property type="match status" value="1"/>
</dbReference>
<dbReference type="FunFam" id="3.40.50.12160:FF:000002">
    <property type="entry name" value="Ribosomal protein S12 methylthiotransferase RimO"/>
    <property type="match status" value="1"/>
</dbReference>
<dbReference type="FunFam" id="3.80.30.20:FF:000001">
    <property type="entry name" value="tRNA-2-methylthio-N(6)-dimethylallyladenosine synthase 2"/>
    <property type="match status" value="1"/>
</dbReference>
<dbReference type="Gene3D" id="3.40.50.12160">
    <property type="entry name" value="Methylthiotransferase, N-terminal domain"/>
    <property type="match status" value="1"/>
</dbReference>
<dbReference type="Gene3D" id="2.40.50.140">
    <property type="entry name" value="Nucleic acid-binding proteins"/>
    <property type="match status" value="1"/>
</dbReference>
<dbReference type="Gene3D" id="3.80.30.20">
    <property type="entry name" value="tm_1862 like domain"/>
    <property type="match status" value="1"/>
</dbReference>
<dbReference type="HAMAP" id="MF_01865">
    <property type="entry name" value="MTTase_RimO"/>
    <property type="match status" value="1"/>
</dbReference>
<dbReference type="InterPro" id="IPR006638">
    <property type="entry name" value="Elp3/MiaA/NifB-like_rSAM"/>
</dbReference>
<dbReference type="InterPro" id="IPR005839">
    <property type="entry name" value="Methylthiotransferase"/>
</dbReference>
<dbReference type="InterPro" id="IPR020612">
    <property type="entry name" value="Methylthiotransferase_CS"/>
</dbReference>
<dbReference type="InterPro" id="IPR013848">
    <property type="entry name" value="Methylthiotransferase_N"/>
</dbReference>
<dbReference type="InterPro" id="IPR038135">
    <property type="entry name" value="Methylthiotransferase_N_sf"/>
</dbReference>
<dbReference type="InterPro" id="IPR012340">
    <property type="entry name" value="NA-bd_OB-fold"/>
</dbReference>
<dbReference type="InterPro" id="IPR005840">
    <property type="entry name" value="Ribosomal_uS12_MeSTrfase_RimO"/>
</dbReference>
<dbReference type="InterPro" id="IPR007197">
    <property type="entry name" value="rSAM"/>
</dbReference>
<dbReference type="InterPro" id="IPR023404">
    <property type="entry name" value="rSAM_horseshoe"/>
</dbReference>
<dbReference type="InterPro" id="IPR002792">
    <property type="entry name" value="TRAM_dom"/>
</dbReference>
<dbReference type="NCBIfam" id="TIGR01125">
    <property type="entry name" value="30S ribosomal protein S12 methylthiotransferase RimO"/>
    <property type="match status" value="1"/>
</dbReference>
<dbReference type="NCBIfam" id="TIGR00089">
    <property type="entry name" value="MiaB/RimO family radical SAM methylthiotransferase"/>
    <property type="match status" value="1"/>
</dbReference>
<dbReference type="PANTHER" id="PTHR43837">
    <property type="entry name" value="RIBOSOMAL PROTEIN S12 METHYLTHIOTRANSFERASE RIMO"/>
    <property type="match status" value="1"/>
</dbReference>
<dbReference type="PANTHER" id="PTHR43837:SF1">
    <property type="entry name" value="RIBOSOMAL PROTEIN US12 METHYLTHIOTRANSFERASE RIMO"/>
    <property type="match status" value="1"/>
</dbReference>
<dbReference type="Pfam" id="PF04055">
    <property type="entry name" value="Radical_SAM"/>
    <property type="match status" value="1"/>
</dbReference>
<dbReference type="Pfam" id="PF18693">
    <property type="entry name" value="TRAM_2"/>
    <property type="match status" value="1"/>
</dbReference>
<dbReference type="Pfam" id="PF00919">
    <property type="entry name" value="UPF0004"/>
    <property type="match status" value="1"/>
</dbReference>
<dbReference type="SFLD" id="SFLDG01082">
    <property type="entry name" value="B12-binding_domain_containing"/>
    <property type="match status" value="1"/>
</dbReference>
<dbReference type="SFLD" id="SFLDS00029">
    <property type="entry name" value="Radical_SAM"/>
    <property type="match status" value="1"/>
</dbReference>
<dbReference type="SFLD" id="SFLDF00274">
    <property type="entry name" value="ribosomal_protein_S12_methylth"/>
    <property type="match status" value="1"/>
</dbReference>
<dbReference type="SMART" id="SM00729">
    <property type="entry name" value="Elp3"/>
    <property type="match status" value="1"/>
</dbReference>
<dbReference type="SUPFAM" id="SSF102114">
    <property type="entry name" value="Radical SAM enzymes"/>
    <property type="match status" value="1"/>
</dbReference>
<dbReference type="PROSITE" id="PS51449">
    <property type="entry name" value="MTTASE_N"/>
    <property type="match status" value="1"/>
</dbReference>
<dbReference type="PROSITE" id="PS01278">
    <property type="entry name" value="MTTASE_RADICAL"/>
    <property type="match status" value="1"/>
</dbReference>
<dbReference type="PROSITE" id="PS51918">
    <property type="entry name" value="RADICAL_SAM"/>
    <property type="match status" value="1"/>
</dbReference>
<dbReference type="PROSITE" id="PS50926">
    <property type="entry name" value="TRAM"/>
    <property type="match status" value="1"/>
</dbReference>
<name>RIMO_STUS1</name>